<accession>Q83CA6</accession>
<feature type="chain" id="PRO_1000050182" description="4-hydroxy-tetrahydrodipicolinate synthase">
    <location>
        <begin position="1"/>
        <end position="289"/>
    </location>
</feature>
<feature type="active site" description="Proton donor/acceptor" evidence="1">
    <location>
        <position position="133"/>
    </location>
</feature>
<feature type="active site" description="Schiff-base intermediate with substrate" evidence="1">
    <location>
        <position position="161"/>
    </location>
</feature>
<feature type="binding site" evidence="1">
    <location>
        <position position="45"/>
    </location>
    <ligand>
        <name>pyruvate</name>
        <dbReference type="ChEBI" id="CHEBI:15361"/>
    </ligand>
</feature>
<feature type="binding site" evidence="1">
    <location>
        <position position="200"/>
    </location>
    <ligand>
        <name>pyruvate</name>
        <dbReference type="ChEBI" id="CHEBI:15361"/>
    </ligand>
</feature>
<feature type="site" description="Part of a proton relay during catalysis" evidence="1">
    <location>
        <position position="44"/>
    </location>
</feature>
<feature type="site" description="Part of a proton relay during catalysis" evidence="1">
    <location>
        <position position="107"/>
    </location>
</feature>
<dbReference type="EC" id="4.3.3.7" evidence="1"/>
<dbReference type="EMBL" id="AE016828">
    <property type="protein sequence ID" value="AAO90731.2"/>
    <property type="status" value="ALT_INIT"/>
    <property type="molecule type" value="Genomic_DNA"/>
</dbReference>
<dbReference type="RefSeq" id="NP_820217.2">
    <property type="nucleotide sequence ID" value="NC_002971.3"/>
</dbReference>
<dbReference type="RefSeq" id="WP_005770744.1">
    <property type="nucleotide sequence ID" value="NZ_CDBG01000001.1"/>
</dbReference>
<dbReference type="RefSeq" id="WP_010958084.1">
    <property type="nucleotide sequence ID" value="NC_002971.4"/>
</dbReference>
<dbReference type="SMR" id="Q83CA6"/>
<dbReference type="STRING" id="227377.CBU_1222"/>
<dbReference type="EnsemblBacteria" id="AAO90731">
    <property type="protein sequence ID" value="AAO90731"/>
    <property type="gene ID" value="CBU_1222"/>
</dbReference>
<dbReference type="GeneID" id="1209127"/>
<dbReference type="KEGG" id="cbu:CBU_1222"/>
<dbReference type="PATRIC" id="fig|227377.7.peg.1215"/>
<dbReference type="eggNOG" id="COG0329">
    <property type="taxonomic scope" value="Bacteria"/>
</dbReference>
<dbReference type="HOGENOM" id="CLU_049343_7_1_6"/>
<dbReference type="OrthoDB" id="9782828at2"/>
<dbReference type="UniPathway" id="UPA00034">
    <property type="reaction ID" value="UER00017"/>
</dbReference>
<dbReference type="Proteomes" id="UP000002671">
    <property type="component" value="Chromosome"/>
</dbReference>
<dbReference type="GO" id="GO:0005829">
    <property type="term" value="C:cytosol"/>
    <property type="evidence" value="ECO:0000318"/>
    <property type="project" value="GO_Central"/>
</dbReference>
<dbReference type="GO" id="GO:0008840">
    <property type="term" value="F:4-hydroxy-tetrahydrodipicolinate synthase activity"/>
    <property type="evidence" value="ECO:0000318"/>
    <property type="project" value="GO_Central"/>
</dbReference>
<dbReference type="GO" id="GO:0019877">
    <property type="term" value="P:diaminopimelate biosynthetic process"/>
    <property type="evidence" value="ECO:0007669"/>
    <property type="project" value="UniProtKB-UniRule"/>
</dbReference>
<dbReference type="GO" id="GO:0009089">
    <property type="term" value="P:lysine biosynthetic process via diaminopimelate"/>
    <property type="evidence" value="ECO:0007669"/>
    <property type="project" value="UniProtKB-UniRule"/>
</dbReference>
<dbReference type="CDD" id="cd00950">
    <property type="entry name" value="DHDPS"/>
    <property type="match status" value="1"/>
</dbReference>
<dbReference type="Gene3D" id="3.20.20.70">
    <property type="entry name" value="Aldolase class I"/>
    <property type="match status" value="1"/>
</dbReference>
<dbReference type="HAMAP" id="MF_00418">
    <property type="entry name" value="DapA"/>
    <property type="match status" value="1"/>
</dbReference>
<dbReference type="InterPro" id="IPR013785">
    <property type="entry name" value="Aldolase_TIM"/>
</dbReference>
<dbReference type="InterPro" id="IPR005263">
    <property type="entry name" value="DapA"/>
</dbReference>
<dbReference type="InterPro" id="IPR002220">
    <property type="entry name" value="DapA-like"/>
</dbReference>
<dbReference type="InterPro" id="IPR020625">
    <property type="entry name" value="Schiff_base-form_aldolases_AS"/>
</dbReference>
<dbReference type="InterPro" id="IPR020624">
    <property type="entry name" value="Schiff_base-form_aldolases_CS"/>
</dbReference>
<dbReference type="NCBIfam" id="TIGR00674">
    <property type="entry name" value="dapA"/>
    <property type="match status" value="1"/>
</dbReference>
<dbReference type="PANTHER" id="PTHR12128:SF66">
    <property type="entry name" value="4-HYDROXY-2-OXOGLUTARATE ALDOLASE, MITOCHONDRIAL"/>
    <property type="match status" value="1"/>
</dbReference>
<dbReference type="PANTHER" id="PTHR12128">
    <property type="entry name" value="DIHYDRODIPICOLINATE SYNTHASE"/>
    <property type="match status" value="1"/>
</dbReference>
<dbReference type="Pfam" id="PF00701">
    <property type="entry name" value="DHDPS"/>
    <property type="match status" value="1"/>
</dbReference>
<dbReference type="PIRSF" id="PIRSF001365">
    <property type="entry name" value="DHDPS"/>
    <property type="match status" value="1"/>
</dbReference>
<dbReference type="PRINTS" id="PR00146">
    <property type="entry name" value="DHPICSNTHASE"/>
</dbReference>
<dbReference type="SMART" id="SM01130">
    <property type="entry name" value="DHDPS"/>
    <property type="match status" value="1"/>
</dbReference>
<dbReference type="SUPFAM" id="SSF51569">
    <property type="entry name" value="Aldolase"/>
    <property type="match status" value="1"/>
</dbReference>
<dbReference type="PROSITE" id="PS00665">
    <property type="entry name" value="DHDPS_1"/>
    <property type="match status" value="1"/>
</dbReference>
<dbReference type="PROSITE" id="PS00666">
    <property type="entry name" value="DHDPS_2"/>
    <property type="match status" value="1"/>
</dbReference>
<organism>
    <name type="scientific">Coxiella burnetii (strain RSA 493 / Nine Mile phase I)</name>
    <dbReference type="NCBI Taxonomy" id="227377"/>
    <lineage>
        <taxon>Bacteria</taxon>
        <taxon>Pseudomonadati</taxon>
        <taxon>Pseudomonadota</taxon>
        <taxon>Gammaproteobacteria</taxon>
        <taxon>Legionellales</taxon>
        <taxon>Coxiellaceae</taxon>
        <taxon>Coxiella</taxon>
    </lineage>
</organism>
<keyword id="KW-0028">Amino-acid biosynthesis</keyword>
<keyword id="KW-0963">Cytoplasm</keyword>
<keyword id="KW-0220">Diaminopimelate biosynthesis</keyword>
<keyword id="KW-0456">Lyase</keyword>
<keyword id="KW-0457">Lysine biosynthesis</keyword>
<keyword id="KW-1185">Reference proteome</keyword>
<keyword id="KW-0704">Schiff base</keyword>
<reference key="1">
    <citation type="journal article" date="2003" name="Proc. Natl. Acad. Sci. U.S.A.">
        <title>Complete genome sequence of the Q-fever pathogen, Coxiella burnetii.</title>
        <authorList>
            <person name="Seshadri R."/>
            <person name="Paulsen I.T."/>
            <person name="Eisen J.A."/>
            <person name="Read T.D."/>
            <person name="Nelson K.E."/>
            <person name="Nelson W.C."/>
            <person name="Ward N.L."/>
            <person name="Tettelin H."/>
            <person name="Davidsen T.M."/>
            <person name="Beanan M.J."/>
            <person name="DeBoy R.T."/>
            <person name="Daugherty S.C."/>
            <person name="Brinkac L.M."/>
            <person name="Madupu R."/>
            <person name="Dodson R.J."/>
            <person name="Khouri H.M."/>
            <person name="Lee K.H."/>
            <person name="Carty H.A."/>
            <person name="Scanlan D."/>
            <person name="Heinzen R.A."/>
            <person name="Thompson H.A."/>
            <person name="Samuel J.E."/>
            <person name="Fraser C.M."/>
            <person name="Heidelberg J.F."/>
        </authorList>
    </citation>
    <scope>NUCLEOTIDE SEQUENCE [LARGE SCALE GENOMIC DNA]</scope>
    <source>
        <strain>RSA 493 / Nine Mile phase I</strain>
    </source>
</reference>
<name>DAPA_COXBU</name>
<sequence length="289" mass="31613">MFNGSLVALVTPMQENGEIDYSNLKELVEWHLENDTDGLVILGTTGESPTITAEERHKIIRQVVDQVNKKIPIIVGTGANSTVHTIEMTQQAMELGADAALIVTPYYNKPTQEGLFQYFKTIAEAVPIAQILYNVPSRTACDLLPETVIRIAKCSNVVGLKEATGDIQRVKQLKAEDLDLLSGDDKTAMDFMLAGGKGVISVVANVVPKPYHAFCITAVSGNVELAKKENDQLSPLYDSLFVESNPIPVKWALSQMGVIPKGIRLPLTPLSERYHAKVRESLQQVGIKC</sequence>
<proteinExistence type="inferred from homology"/>
<gene>
    <name evidence="1" type="primary">dapA</name>
    <name type="ordered locus">CBU_1222</name>
</gene>
<comment type="function">
    <text evidence="1">Catalyzes the condensation of (S)-aspartate-beta-semialdehyde [(S)-ASA] and pyruvate to 4-hydroxy-tetrahydrodipicolinate (HTPA).</text>
</comment>
<comment type="catalytic activity">
    <reaction evidence="1">
        <text>L-aspartate 4-semialdehyde + pyruvate = (2S,4S)-4-hydroxy-2,3,4,5-tetrahydrodipicolinate + H2O + H(+)</text>
        <dbReference type="Rhea" id="RHEA:34171"/>
        <dbReference type="ChEBI" id="CHEBI:15361"/>
        <dbReference type="ChEBI" id="CHEBI:15377"/>
        <dbReference type="ChEBI" id="CHEBI:15378"/>
        <dbReference type="ChEBI" id="CHEBI:67139"/>
        <dbReference type="ChEBI" id="CHEBI:537519"/>
        <dbReference type="EC" id="4.3.3.7"/>
    </reaction>
</comment>
<comment type="pathway">
    <text evidence="1">Amino-acid biosynthesis; L-lysine biosynthesis via DAP pathway; (S)-tetrahydrodipicolinate from L-aspartate: step 3/4.</text>
</comment>
<comment type="subunit">
    <text evidence="1">Homotetramer; dimer of dimers.</text>
</comment>
<comment type="subcellular location">
    <subcellularLocation>
        <location evidence="1">Cytoplasm</location>
    </subcellularLocation>
</comment>
<comment type="similarity">
    <text evidence="1">Belongs to the DapA family.</text>
</comment>
<comment type="caution">
    <text evidence="2">Was originally thought to be a dihydrodipicolinate synthase (DHDPS), catalyzing the condensation of (S)-aspartate-beta-semialdehyde [(S)-ASA] and pyruvate to dihydrodipicolinate (DHDP). However, it was shown in E.coli that the product of the enzymatic reaction is not dihydrodipicolinate but in fact (4S)-4-hydroxy-2,3,4,5-tetrahydro-(2S)-dipicolinic acid (HTPA), and that the consecutive dehydration reaction leading to DHDP is not spontaneous but catalyzed by DapB.</text>
</comment>
<comment type="sequence caution" evidence="2">
    <conflict type="erroneous initiation">
        <sequence resource="EMBL-CDS" id="AAO90731"/>
    </conflict>
</comment>
<protein>
    <recommendedName>
        <fullName evidence="1">4-hydroxy-tetrahydrodipicolinate synthase</fullName>
        <shortName evidence="1">HTPA synthase</shortName>
        <ecNumber evidence="1">4.3.3.7</ecNumber>
    </recommendedName>
</protein>
<evidence type="ECO:0000255" key="1">
    <source>
        <dbReference type="HAMAP-Rule" id="MF_00418"/>
    </source>
</evidence>
<evidence type="ECO:0000305" key="2"/>